<dbReference type="EC" id="2.5.1.43"/>
<dbReference type="EMBL" id="AB021935">
    <property type="protein sequence ID" value="BAA74590.1"/>
    <property type="molecule type" value="Genomic_DNA"/>
</dbReference>
<dbReference type="EMBL" id="AB011476">
    <property type="protein sequence ID" value="BAB09290.1"/>
    <property type="molecule type" value="Genomic_DNA"/>
</dbReference>
<dbReference type="EMBL" id="CP002688">
    <property type="protein sequence ID" value="AED96719.1"/>
    <property type="molecule type" value="Genomic_DNA"/>
</dbReference>
<dbReference type="EMBL" id="BT030013">
    <property type="protein sequence ID" value="ABN04751.1"/>
    <property type="molecule type" value="mRNA"/>
</dbReference>
<dbReference type="RefSeq" id="NP_200419.1">
    <property type="nucleotide sequence ID" value="NM_124990.2"/>
</dbReference>
<dbReference type="SMR" id="Q9FKT9"/>
<dbReference type="FunCoup" id="Q9FKT9">
    <property type="interactions" value="122"/>
</dbReference>
<dbReference type="STRING" id="3702.Q9FKT9"/>
<dbReference type="PaxDb" id="3702-AT5G56080.1"/>
<dbReference type="ProteomicsDB" id="251038"/>
<dbReference type="EnsemblPlants" id="AT5G56080.1">
    <property type="protein sequence ID" value="AT5G56080.1"/>
    <property type="gene ID" value="AT5G56080"/>
</dbReference>
<dbReference type="GeneID" id="835707"/>
<dbReference type="Gramene" id="AT5G56080.1">
    <property type="protein sequence ID" value="AT5G56080.1"/>
    <property type="gene ID" value="AT5G56080"/>
</dbReference>
<dbReference type="KEGG" id="ath:AT5G56080"/>
<dbReference type="Araport" id="AT5G56080"/>
<dbReference type="TAIR" id="AT5G56080">
    <property type="gene designation" value="NAS2"/>
</dbReference>
<dbReference type="eggNOG" id="ENOG502QTU6">
    <property type="taxonomic scope" value="Eukaryota"/>
</dbReference>
<dbReference type="HOGENOM" id="CLU_031919_1_1_1"/>
<dbReference type="InParanoid" id="Q9FKT9"/>
<dbReference type="OMA" id="NNRGMEK"/>
<dbReference type="PhylomeDB" id="Q9FKT9"/>
<dbReference type="BioCyc" id="ARA:AT5G56080-MONOMER"/>
<dbReference type="BRENDA" id="2.5.1.43">
    <property type="organism ID" value="399"/>
</dbReference>
<dbReference type="PRO" id="PR:Q9FKT9"/>
<dbReference type="Proteomes" id="UP000006548">
    <property type="component" value="Chromosome 5"/>
</dbReference>
<dbReference type="ExpressionAtlas" id="Q9FKT9">
    <property type="expression patterns" value="baseline and differential"/>
</dbReference>
<dbReference type="GO" id="GO:0030410">
    <property type="term" value="F:nicotianamine synthase activity"/>
    <property type="evidence" value="ECO:0007669"/>
    <property type="project" value="UniProtKB-EC"/>
</dbReference>
<dbReference type="GO" id="GO:0030418">
    <property type="term" value="P:nicotianamine biosynthetic process"/>
    <property type="evidence" value="ECO:0007669"/>
    <property type="project" value="InterPro"/>
</dbReference>
<dbReference type="GO" id="GO:0010233">
    <property type="term" value="P:phloem transport"/>
    <property type="evidence" value="ECO:0000316"/>
    <property type="project" value="TAIR"/>
</dbReference>
<dbReference type="GO" id="GO:0009555">
    <property type="term" value="P:pollen development"/>
    <property type="evidence" value="ECO:0000316"/>
    <property type="project" value="TAIR"/>
</dbReference>
<dbReference type="GO" id="GO:0009860">
    <property type="term" value="P:pollen tube growth"/>
    <property type="evidence" value="ECO:0000316"/>
    <property type="project" value="TAIR"/>
</dbReference>
<dbReference type="GO" id="GO:0010043">
    <property type="term" value="P:response to zinc ion"/>
    <property type="evidence" value="ECO:0000270"/>
    <property type="project" value="TAIR"/>
</dbReference>
<dbReference type="FunFam" id="3.40.50.150:FF:000182">
    <property type="entry name" value="Nicotianamine synthase"/>
    <property type="match status" value="1"/>
</dbReference>
<dbReference type="Gene3D" id="3.40.50.150">
    <property type="entry name" value="Vaccinia Virus protein VP39"/>
    <property type="match status" value="1"/>
</dbReference>
<dbReference type="InterPro" id="IPR004298">
    <property type="entry name" value="Nicotian_synth"/>
</dbReference>
<dbReference type="InterPro" id="IPR029063">
    <property type="entry name" value="SAM-dependent_MTases_sf"/>
</dbReference>
<dbReference type="PANTHER" id="PTHR32266:SF18">
    <property type="entry name" value="NICOTIANAMINE SYNTHASE 2"/>
    <property type="match status" value="1"/>
</dbReference>
<dbReference type="PANTHER" id="PTHR32266">
    <property type="entry name" value="NICOTIANAMINE SYNTHASE 3"/>
    <property type="match status" value="1"/>
</dbReference>
<dbReference type="Pfam" id="PF03059">
    <property type="entry name" value="NAS"/>
    <property type="match status" value="1"/>
</dbReference>
<dbReference type="SUPFAM" id="SSF53335">
    <property type="entry name" value="S-adenosyl-L-methionine-dependent methyltransferases"/>
    <property type="match status" value="1"/>
</dbReference>
<dbReference type="PROSITE" id="PS51142">
    <property type="entry name" value="NAS"/>
    <property type="match status" value="1"/>
</dbReference>
<evidence type="ECO:0000305" key="1"/>
<accession>Q9FKT9</accession>
<accession>A2RVM2</accession>
<accession>Q9ZWF7</accession>
<gene>
    <name type="primary">NAS2</name>
    <name type="ordered locus">At5g56080</name>
    <name type="ORF">MDA7.14</name>
</gene>
<proteinExistence type="evidence at transcript level"/>
<feature type="chain" id="PRO_0000212701" description="Nicotianamine synthase 2">
    <location>
        <begin position="1"/>
        <end position="320"/>
    </location>
</feature>
<feature type="sequence conflict" description="In Ref. 1; BAA74590." evidence="1" ref="1">
    <original>E</original>
    <variation>Q</variation>
    <location>
        <position position="4"/>
    </location>
</feature>
<feature type="sequence conflict" description="In Ref. 1; BAA74590." evidence="1" ref="1">
    <original>Y</original>
    <variation>F</variation>
    <location>
        <position position="316"/>
    </location>
</feature>
<keyword id="KW-1185">Reference proteome</keyword>
<keyword id="KW-0949">S-adenosyl-L-methionine</keyword>
<keyword id="KW-0808">Transferase</keyword>
<sequence length="320" mass="35679">MACENNLVVKQIMDLYNQISNLESLKPSKNVDTLFRQLVSTCLPTDTNIDVTEIHDEKVKDMRSHLIKLCGEAEGYLEQHFSAILGSFEDNPLNHLHIFPYYNNYLKLGKLEFDLLSQHTTHVPTKVAFIGSGPMPLTSIVLAKFHLPNTTFHNFDIDSHANTLASNLVSRDSDLSKRMIFHTTDVLNAKEGLDQYDVVFLAALVGMDKESKVKAIEHLEKHMAPGAVVMLRSAHGLRAFLYPIVDSCDLKGFEVLTIYHPSDDVVNSVVIARKLGGSNGARGSQIGRCVVMPCNCSKVHAILNNRGMEKNLIEEYSAIE</sequence>
<name>NAS2_ARATH</name>
<comment type="function">
    <text>Synthesizes nicotianamine, a polyamine which serves as a sensor for the physiological iron status within the plant, and/or might be involved in the transport of iron.</text>
</comment>
<comment type="catalytic activity">
    <reaction>
        <text>3 S-adenosyl-L-methionine = nicotianamine + 3 S-methyl-5'-thioadenosine + 3 H(+)</text>
        <dbReference type="Rhea" id="RHEA:16481"/>
        <dbReference type="ChEBI" id="CHEBI:15378"/>
        <dbReference type="ChEBI" id="CHEBI:17509"/>
        <dbReference type="ChEBI" id="CHEBI:58249"/>
        <dbReference type="ChEBI" id="CHEBI:59789"/>
        <dbReference type="EC" id="2.5.1.43"/>
    </reaction>
</comment>
<comment type="similarity">
    <text evidence="1">Belongs to the nicotianamine synthase (NAS)-like family.</text>
</comment>
<protein>
    <recommendedName>
        <fullName>Nicotianamine synthase 2</fullName>
        <ecNumber>2.5.1.43</ecNumber>
    </recommendedName>
    <alternativeName>
        <fullName>S-adenosyl-L-methionine:S-adenosyl-L-methionine:S-adenosyl-methionine 3-amino-3-carboxypropyltransferase 2</fullName>
        <shortName>AtNAS2</shortName>
    </alternativeName>
</protein>
<organism>
    <name type="scientific">Arabidopsis thaliana</name>
    <name type="common">Mouse-ear cress</name>
    <dbReference type="NCBI Taxonomy" id="3702"/>
    <lineage>
        <taxon>Eukaryota</taxon>
        <taxon>Viridiplantae</taxon>
        <taxon>Streptophyta</taxon>
        <taxon>Embryophyta</taxon>
        <taxon>Tracheophyta</taxon>
        <taxon>Spermatophyta</taxon>
        <taxon>Magnoliopsida</taxon>
        <taxon>eudicotyledons</taxon>
        <taxon>Gunneridae</taxon>
        <taxon>Pentapetalae</taxon>
        <taxon>rosids</taxon>
        <taxon>malvids</taxon>
        <taxon>Brassicales</taxon>
        <taxon>Brassicaceae</taxon>
        <taxon>Camelineae</taxon>
        <taxon>Arabidopsis</taxon>
    </lineage>
</organism>
<reference key="1">
    <citation type="journal article" date="1999" name="Soil Sci. Plant Nutr.">
        <title>Cloning of nicotianamine synthase genes from Arabidopsis thaliana.</title>
        <authorList>
            <person name="Suzuki K."/>
            <person name="Higuchi K."/>
            <person name="Nakanishi H."/>
            <person name="Nishizawa N.-K."/>
            <person name="Mori S."/>
        </authorList>
    </citation>
    <scope>NUCLEOTIDE SEQUENCE [GENOMIC DNA]</scope>
    <source>
        <strain>cv. Columbia</strain>
    </source>
</reference>
<reference key="2">
    <citation type="journal article" date="1998" name="DNA Res.">
        <title>Structural analysis of Arabidopsis thaliana chromosome 5. V. Sequence features of the regions of 1,381,565 bp covered by twenty one physically assigned P1 and TAC clones.</title>
        <authorList>
            <person name="Kaneko T."/>
            <person name="Kotani H."/>
            <person name="Nakamura Y."/>
            <person name="Sato S."/>
            <person name="Asamizu E."/>
            <person name="Miyajima N."/>
            <person name="Tabata S."/>
        </authorList>
    </citation>
    <scope>NUCLEOTIDE SEQUENCE [LARGE SCALE GENOMIC DNA]</scope>
    <source>
        <strain>cv. Columbia</strain>
    </source>
</reference>
<reference key="3">
    <citation type="journal article" date="2017" name="Plant J.">
        <title>Araport11: a complete reannotation of the Arabidopsis thaliana reference genome.</title>
        <authorList>
            <person name="Cheng C.Y."/>
            <person name="Krishnakumar V."/>
            <person name="Chan A.P."/>
            <person name="Thibaud-Nissen F."/>
            <person name="Schobel S."/>
            <person name="Town C.D."/>
        </authorList>
    </citation>
    <scope>GENOME REANNOTATION</scope>
    <source>
        <strain>cv. Columbia</strain>
    </source>
</reference>
<reference key="4">
    <citation type="submission" date="2007-01" db="EMBL/GenBank/DDBJ databases">
        <title>Arabidopsis ORF clones.</title>
        <authorList>
            <person name="Bautista V.R."/>
            <person name="Kim C.J."/>
            <person name="Chen H."/>
            <person name="Wu S.Y."/>
            <person name="De Los Reyes C."/>
            <person name="Ecker J.R."/>
        </authorList>
    </citation>
    <scope>NUCLEOTIDE SEQUENCE [LARGE SCALE MRNA]</scope>
    <source>
        <strain>cv. Columbia</strain>
    </source>
</reference>